<gene>
    <name evidence="1" type="primary">nadA</name>
    <name type="ordered locus">HEAR1089</name>
</gene>
<name>NADA_HERAR</name>
<comment type="function">
    <text evidence="1">Catalyzes the condensation of iminoaspartate with dihydroxyacetone phosphate to form quinolinate.</text>
</comment>
<comment type="catalytic activity">
    <reaction evidence="1">
        <text>iminosuccinate + dihydroxyacetone phosphate = quinolinate + phosphate + 2 H2O + H(+)</text>
        <dbReference type="Rhea" id="RHEA:25888"/>
        <dbReference type="ChEBI" id="CHEBI:15377"/>
        <dbReference type="ChEBI" id="CHEBI:15378"/>
        <dbReference type="ChEBI" id="CHEBI:29959"/>
        <dbReference type="ChEBI" id="CHEBI:43474"/>
        <dbReference type="ChEBI" id="CHEBI:57642"/>
        <dbReference type="ChEBI" id="CHEBI:77875"/>
        <dbReference type="EC" id="2.5.1.72"/>
    </reaction>
    <physiologicalReaction direction="left-to-right" evidence="1">
        <dbReference type="Rhea" id="RHEA:25889"/>
    </physiologicalReaction>
</comment>
<comment type="cofactor">
    <cofactor evidence="1">
        <name>[4Fe-4S] cluster</name>
        <dbReference type="ChEBI" id="CHEBI:49883"/>
    </cofactor>
    <text evidence="1">Binds 1 [4Fe-4S] cluster per subunit.</text>
</comment>
<comment type="pathway">
    <text evidence="1">Cofactor biosynthesis; NAD(+) biosynthesis; quinolinate from iminoaspartate: step 1/1.</text>
</comment>
<comment type="subcellular location">
    <subcellularLocation>
        <location evidence="1">Cytoplasm</location>
    </subcellularLocation>
</comment>
<comment type="similarity">
    <text evidence="1">Belongs to the quinolinate synthase family. Type 1 subfamily.</text>
</comment>
<organism>
    <name type="scientific">Herminiimonas arsenicoxydans</name>
    <dbReference type="NCBI Taxonomy" id="204773"/>
    <lineage>
        <taxon>Bacteria</taxon>
        <taxon>Pseudomonadati</taxon>
        <taxon>Pseudomonadota</taxon>
        <taxon>Betaproteobacteria</taxon>
        <taxon>Burkholderiales</taxon>
        <taxon>Oxalobacteraceae</taxon>
        <taxon>Herminiimonas</taxon>
    </lineage>
</organism>
<evidence type="ECO:0000255" key="1">
    <source>
        <dbReference type="HAMAP-Rule" id="MF_00567"/>
    </source>
</evidence>
<reference key="1">
    <citation type="journal article" date="2007" name="PLoS Genet.">
        <title>A tale of two oxidation states: bacterial colonization of arsenic-rich environments.</title>
        <authorList>
            <person name="Muller D."/>
            <person name="Medigue C."/>
            <person name="Koechler S."/>
            <person name="Barbe V."/>
            <person name="Barakat M."/>
            <person name="Talla E."/>
            <person name="Bonnefoy V."/>
            <person name="Krin E."/>
            <person name="Arsene-Ploetze F."/>
            <person name="Carapito C."/>
            <person name="Chandler M."/>
            <person name="Cournoyer B."/>
            <person name="Cruveiller S."/>
            <person name="Dossat C."/>
            <person name="Duval S."/>
            <person name="Heymann M."/>
            <person name="Leize E."/>
            <person name="Lieutaud A."/>
            <person name="Lievremont D."/>
            <person name="Makita Y."/>
            <person name="Mangenot S."/>
            <person name="Nitschke W."/>
            <person name="Ortet P."/>
            <person name="Perdrial N."/>
            <person name="Schoepp B."/>
            <person name="Siguier P."/>
            <person name="Simeonova D.D."/>
            <person name="Rouy Z."/>
            <person name="Segurens B."/>
            <person name="Turlin E."/>
            <person name="Vallenet D."/>
            <person name="van Dorsselaer A."/>
            <person name="Weiss S."/>
            <person name="Weissenbach J."/>
            <person name="Lett M.-C."/>
            <person name="Danchin A."/>
            <person name="Bertin P.N."/>
        </authorList>
    </citation>
    <scope>NUCLEOTIDE SEQUENCE [LARGE SCALE GENOMIC DNA]</scope>
    <source>
        <strain>ULPAs1</strain>
    </source>
</reference>
<dbReference type="EC" id="2.5.1.72" evidence="1"/>
<dbReference type="EMBL" id="CU207211">
    <property type="protein sequence ID" value="CAL61268.1"/>
    <property type="molecule type" value="Genomic_DNA"/>
</dbReference>
<dbReference type="SMR" id="A4G431"/>
<dbReference type="STRING" id="204773.HEAR1089"/>
<dbReference type="KEGG" id="har:HEAR1089"/>
<dbReference type="eggNOG" id="COG0379">
    <property type="taxonomic scope" value="Bacteria"/>
</dbReference>
<dbReference type="HOGENOM" id="CLU_047382_1_0_4"/>
<dbReference type="OrthoDB" id="9801204at2"/>
<dbReference type="UniPathway" id="UPA00253">
    <property type="reaction ID" value="UER00327"/>
</dbReference>
<dbReference type="Proteomes" id="UP000006697">
    <property type="component" value="Chromosome"/>
</dbReference>
<dbReference type="GO" id="GO:0005829">
    <property type="term" value="C:cytosol"/>
    <property type="evidence" value="ECO:0007669"/>
    <property type="project" value="TreeGrafter"/>
</dbReference>
<dbReference type="GO" id="GO:0051539">
    <property type="term" value="F:4 iron, 4 sulfur cluster binding"/>
    <property type="evidence" value="ECO:0007669"/>
    <property type="project" value="UniProtKB-KW"/>
</dbReference>
<dbReference type="GO" id="GO:0046872">
    <property type="term" value="F:metal ion binding"/>
    <property type="evidence" value="ECO:0007669"/>
    <property type="project" value="UniProtKB-KW"/>
</dbReference>
<dbReference type="GO" id="GO:0008987">
    <property type="term" value="F:quinolinate synthetase A activity"/>
    <property type="evidence" value="ECO:0007669"/>
    <property type="project" value="UniProtKB-UniRule"/>
</dbReference>
<dbReference type="GO" id="GO:0034628">
    <property type="term" value="P:'de novo' NAD biosynthetic process from L-aspartate"/>
    <property type="evidence" value="ECO:0007669"/>
    <property type="project" value="TreeGrafter"/>
</dbReference>
<dbReference type="FunFam" id="3.40.50.10800:FF:000003">
    <property type="entry name" value="Quinolinate synthase A"/>
    <property type="match status" value="1"/>
</dbReference>
<dbReference type="Gene3D" id="3.40.50.10800">
    <property type="entry name" value="NadA-like"/>
    <property type="match status" value="3"/>
</dbReference>
<dbReference type="HAMAP" id="MF_00567">
    <property type="entry name" value="NadA_type1"/>
    <property type="match status" value="1"/>
</dbReference>
<dbReference type="InterPro" id="IPR003473">
    <property type="entry name" value="NadA"/>
</dbReference>
<dbReference type="InterPro" id="IPR036094">
    <property type="entry name" value="NadA_sf"/>
</dbReference>
<dbReference type="InterPro" id="IPR023513">
    <property type="entry name" value="Quinolinate_synth_A_type1"/>
</dbReference>
<dbReference type="NCBIfam" id="TIGR00550">
    <property type="entry name" value="nadA"/>
    <property type="match status" value="1"/>
</dbReference>
<dbReference type="NCBIfam" id="NF006877">
    <property type="entry name" value="PRK09375.1-1"/>
    <property type="match status" value="1"/>
</dbReference>
<dbReference type="NCBIfam" id="NF006878">
    <property type="entry name" value="PRK09375.1-2"/>
    <property type="match status" value="1"/>
</dbReference>
<dbReference type="PANTHER" id="PTHR30573:SF0">
    <property type="entry name" value="QUINOLINATE SYNTHASE, CHLOROPLASTIC"/>
    <property type="match status" value="1"/>
</dbReference>
<dbReference type="PANTHER" id="PTHR30573">
    <property type="entry name" value="QUINOLINATE SYNTHETASE A"/>
    <property type="match status" value="1"/>
</dbReference>
<dbReference type="Pfam" id="PF02445">
    <property type="entry name" value="NadA"/>
    <property type="match status" value="1"/>
</dbReference>
<dbReference type="SUPFAM" id="SSF142754">
    <property type="entry name" value="NadA-like"/>
    <property type="match status" value="1"/>
</dbReference>
<accession>A4G431</accession>
<sequence length="379" mass="41127">MQTQFIKTIEFERPGMESGSSCVAHAWARTPATPSPEEKIALKDRIRHLLKEREAVLVAHYYVDADLQDLAEETGGCVSDSLEMARFGRDHPAKTLVVAGVKFMGETAKILSPEKTILMPDLDATCSLDLGCPVDEFHAFCDAHPDRVVVVYANTSAAVKARADWMVTSSIGLKIVEHLHVQGKKILWAPDKHLGGYIQKQTGADMLLWQGSCLVHDEFKAVELELLKKEHPLAKVLVHPESPAAVVALADAVGSTSQLIHAAQTMDAPEFIVATDNGILHKMKMAAPGKIFIDAPTAGNSATCKSCAHCPWMAMNGLQNLLDVLESGRNEIHVDPEIGRKATVCIDRMLDFAAAQKANVRPSSDLAKEQKLFSGIGPA</sequence>
<protein>
    <recommendedName>
        <fullName evidence="1">Quinolinate synthase</fullName>
        <ecNumber evidence="1">2.5.1.72</ecNumber>
    </recommendedName>
</protein>
<proteinExistence type="inferred from homology"/>
<feature type="chain" id="PRO_1000129420" description="Quinolinate synthase">
    <location>
        <begin position="1"/>
        <end position="379"/>
    </location>
</feature>
<feature type="binding site" evidence="1">
    <location>
        <position position="60"/>
    </location>
    <ligand>
        <name>iminosuccinate</name>
        <dbReference type="ChEBI" id="CHEBI:77875"/>
    </ligand>
</feature>
<feature type="binding site" evidence="1">
    <location>
        <position position="81"/>
    </location>
    <ligand>
        <name>iminosuccinate</name>
        <dbReference type="ChEBI" id="CHEBI:77875"/>
    </ligand>
</feature>
<feature type="binding site" evidence="1">
    <location>
        <position position="126"/>
    </location>
    <ligand>
        <name>[4Fe-4S] cluster</name>
        <dbReference type="ChEBI" id="CHEBI:49883"/>
    </ligand>
</feature>
<feature type="binding site" evidence="1">
    <location>
        <begin position="152"/>
        <end position="154"/>
    </location>
    <ligand>
        <name>iminosuccinate</name>
        <dbReference type="ChEBI" id="CHEBI:77875"/>
    </ligand>
</feature>
<feature type="binding site" evidence="1">
    <location>
        <position position="169"/>
    </location>
    <ligand>
        <name>iminosuccinate</name>
        <dbReference type="ChEBI" id="CHEBI:77875"/>
    </ligand>
</feature>
<feature type="binding site" evidence="1">
    <location>
        <position position="213"/>
    </location>
    <ligand>
        <name>[4Fe-4S] cluster</name>
        <dbReference type="ChEBI" id="CHEBI:49883"/>
    </ligand>
</feature>
<feature type="binding site" evidence="1">
    <location>
        <begin position="239"/>
        <end position="241"/>
    </location>
    <ligand>
        <name>iminosuccinate</name>
        <dbReference type="ChEBI" id="CHEBI:77875"/>
    </ligand>
</feature>
<feature type="binding site" evidence="1">
    <location>
        <position position="256"/>
    </location>
    <ligand>
        <name>iminosuccinate</name>
        <dbReference type="ChEBI" id="CHEBI:77875"/>
    </ligand>
</feature>
<feature type="binding site" evidence="1">
    <location>
        <position position="310"/>
    </location>
    <ligand>
        <name>[4Fe-4S] cluster</name>
        <dbReference type="ChEBI" id="CHEBI:49883"/>
    </ligand>
</feature>
<keyword id="KW-0004">4Fe-4S</keyword>
<keyword id="KW-0963">Cytoplasm</keyword>
<keyword id="KW-0408">Iron</keyword>
<keyword id="KW-0411">Iron-sulfur</keyword>
<keyword id="KW-0479">Metal-binding</keyword>
<keyword id="KW-0662">Pyridine nucleotide biosynthesis</keyword>
<keyword id="KW-1185">Reference proteome</keyword>
<keyword id="KW-0808">Transferase</keyword>